<reference key="1">
    <citation type="submission" date="2007-06" db="EMBL/GenBank/DDBJ databases">
        <authorList>
            <consortium name="NIH - Mammalian Gene Collection (MGC) project"/>
        </authorList>
    </citation>
    <scope>NUCLEOTIDE SEQUENCE [LARGE SCALE MRNA]</scope>
    <source>
        <strain>Hereford</strain>
        <tissue>Fetal medulla</tissue>
        <tissue>Testis</tissue>
    </source>
</reference>
<accession>Q2KIW3</accession>
<accession>A6QL47</accession>
<name>DYDC2_BOVIN</name>
<evidence type="ECO:0000256" key="1">
    <source>
        <dbReference type="SAM" id="MobiDB-lite"/>
    </source>
</evidence>
<evidence type="ECO:0000305" key="2"/>
<sequence>METNYLKRCFGNRLAQALAEVAMVQPSDPIEYLAHWLYHYRKTAKAKEKDRQEKIQLQREYENSLKETRMAEMLKQEERAIQEQCEKCHYQLGRRNSAVGTHPHPVPLISVASSLEKTKFMQENTEAFEKEPLKQESLPGTSDMIPGMPQQSPSSEPSVSSQVDLNTGTPQEINYQAIQHEIALEIHPGSESPP</sequence>
<dbReference type="EMBL" id="BC112485">
    <property type="protein sequence ID" value="AAI12486.1"/>
    <property type="molecule type" value="mRNA"/>
</dbReference>
<dbReference type="EMBL" id="BC146140">
    <property type="protein sequence ID" value="AAI46141.1"/>
    <property type="molecule type" value="mRNA"/>
</dbReference>
<dbReference type="RefSeq" id="NP_001039628.1">
    <property type="nucleotide sequence ID" value="NM_001046163.1"/>
</dbReference>
<dbReference type="RefSeq" id="XP_005226422.1">
    <property type="nucleotide sequence ID" value="XM_005226365.5"/>
</dbReference>
<dbReference type="RefSeq" id="XP_005226423.1">
    <property type="nucleotide sequence ID" value="XM_005226366.4"/>
</dbReference>
<dbReference type="RefSeq" id="XP_005226424.1">
    <property type="nucleotide sequence ID" value="XM_005226367.4"/>
</dbReference>
<dbReference type="RefSeq" id="XP_005226425.1">
    <property type="nucleotide sequence ID" value="XM_005226368.5"/>
</dbReference>
<dbReference type="RefSeq" id="XP_005226426.1">
    <property type="nucleotide sequence ID" value="XM_005226369.5"/>
</dbReference>
<dbReference type="RefSeq" id="XP_010818877.1">
    <property type="nucleotide sequence ID" value="XM_010820575.4"/>
</dbReference>
<dbReference type="RefSeq" id="XP_015316483.1">
    <property type="nucleotide sequence ID" value="XM_015460997.1"/>
</dbReference>
<dbReference type="RefSeq" id="XP_024842406.1">
    <property type="nucleotide sequence ID" value="XM_024986638.2"/>
</dbReference>
<dbReference type="RefSeq" id="XP_059738479.1">
    <property type="nucleotide sequence ID" value="XM_059882496.1"/>
</dbReference>
<dbReference type="SMR" id="Q2KIW3"/>
<dbReference type="FunCoup" id="Q2KIW3">
    <property type="interactions" value="22"/>
</dbReference>
<dbReference type="STRING" id="9913.ENSBTAP00000043930"/>
<dbReference type="PaxDb" id="9913-ENSBTAP00000043930"/>
<dbReference type="Ensembl" id="ENSBTAT00000046653.2">
    <property type="protein sequence ID" value="ENSBTAP00000043930.1"/>
    <property type="gene ID" value="ENSBTAG00000032862.4"/>
</dbReference>
<dbReference type="GeneID" id="514060"/>
<dbReference type="KEGG" id="bta:514060"/>
<dbReference type="CTD" id="84332"/>
<dbReference type="VEuPathDB" id="HostDB:ENSBTAG00000032862"/>
<dbReference type="VGNC" id="VGNC:28268">
    <property type="gene designation" value="DYDC2"/>
</dbReference>
<dbReference type="eggNOG" id="ENOG502S3U3">
    <property type="taxonomic scope" value="Eukaryota"/>
</dbReference>
<dbReference type="GeneTree" id="ENSGT00940000162091"/>
<dbReference type="HOGENOM" id="CLU_117703_0_0_1"/>
<dbReference type="InParanoid" id="Q2KIW3"/>
<dbReference type="OMA" id="AHWLYHH"/>
<dbReference type="OrthoDB" id="432281at2759"/>
<dbReference type="TreeFam" id="TF330747"/>
<dbReference type="Proteomes" id="UP000009136">
    <property type="component" value="Chromosome 28"/>
</dbReference>
<dbReference type="Bgee" id="ENSBTAG00000032862">
    <property type="expression patterns" value="Expressed in oviduct epithelium and 53 other cell types or tissues"/>
</dbReference>
<dbReference type="GO" id="GO:0048188">
    <property type="term" value="C:Set1C/COMPASS complex"/>
    <property type="evidence" value="ECO:0007669"/>
    <property type="project" value="InterPro"/>
</dbReference>
<dbReference type="CDD" id="cd22966">
    <property type="entry name" value="DD_DYDC-like"/>
    <property type="match status" value="1"/>
</dbReference>
<dbReference type="FunFam" id="1.20.890.10:FF:000012">
    <property type="entry name" value="DPY30 domain containing 2"/>
    <property type="match status" value="1"/>
</dbReference>
<dbReference type="Gene3D" id="1.20.890.10">
    <property type="entry name" value="cAMP-dependent protein kinase regulatory subunit, dimerization-anchoring domain"/>
    <property type="match status" value="1"/>
</dbReference>
<dbReference type="InterPro" id="IPR007858">
    <property type="entry name" value="Dpy-30_motif"/>
</dbReference>
<dbReference type="InterPro" id="IPR049630">
    <property type="entry name" value="DYDC-like_DD"/>
</dbReference>
<dbReference type="InterPro" id="IPR037856">
    <property type="entry name" value="Sdc1/DPY30"/>
</dbReference>
<dbReference type="PANTHER" id="PTHR23356:SF3">
    <property type="entry name" value="DPY30 DOMAIN-CONTAINING PROTEIN 2"/>
    <property type="match status" value="1"/>
</dbReference>
<dbReference type="PANTHER" id="PTHR23356">
    <property type="entry name" value="DPY30-RELATED"/>
    <property type="match status" value="1"/>
</dbReference>
<dbReference type="Pfam" id="PF05186">
    <property type="entry name" value="Dpy-30"/>
    <property type="match status" value="1"/>
</dbReference>
<organism>
    <name type="scientific">Bos taurus</name>
    <name type="common">Bovine</name>
    <dbReference type="NCBI Taxonomy" id="9913"/>
    <lineage>
        <taxon>Eukaryota</taxon>
        <taxon>Metazoa</taxon>
        <taxon>Chordata</taxon>
        <taxon>Craniata</taxon>
        <taxon>Vertebrata</taxon>
        <taxon>Euteleostomi</taxon>
        <taxon>Mammalia</taxon>
        <taxon>Eutheria</taxon>
        <taxon>Laurasiatheria</taxon>
        <taxon>Artiodactyla</taxon>
        <taxon>Ruminantia</taxon>
        <taxon>Pecora</taxon>
        <taxon>Bovidae</taxon>
        <taxon>Bovinae</taxon>
        <taxon>Bos</taxon>
    </lineage>
</organism>
<keyword id="KW-1185">Reference proteome</keyword>
<feature type="chain" id="PRO_0000247558" description="DPY30 domain-containing protein 2">
    <location>
        <begin position="1"/>
        <end position="194"/>
    </location>
</feature>
<feature type="region of interest" description="Disordered" evidence="1">
    <location>
        <begin position="126"/>
        <end position="172"/>
    </location>
</feature>
<feature type="compositionally biased region" description="Low complexity" evidence="1">
    <location>
        <begin position="149"/>
        <end position="163"/>
    </location>
</feature>
<proteinExistence type="evidence at transcript level"/>
<gene>
    <name type="primary">DYDC2</name>
</gene>
<protein>
    <recommendedName>
        <fullName>DPY30 domain-containing protein 2</fullName>
    </recommendedName>
</protein>
<comment type="similarity">
    <text evidence="2">Belongs to the dpy-30 family.</text>
</comment>